<proteinExistence type="evidence at transcript level"/>
<reference key="1">
    <citation type="journal article" date="2002" name="Mol. Cell. Endocrinol.">
        <title>Characterization and primary structures of bovine and porcine thyroxine-binding globulin.</title>
        <authorList>
            <person name="Janssen O.E."/>
            <person name="Lahner H."/>
            <person name="Grasberger H."/>
            <person name="Spring S.A."/>
            <person name="Saller B."/>
            <person name="Mann K."/>
            <person name="Refetoff S."/>
            <person name="Einspanier R."/>
        </authorList>
    </citation>
    <scope>NUCLEOTIDE SEQUENCE [MRNA]</scope>
</reference>
<keyword id="KW-0325">Glycoprotein</keyword>
<keyword id="KW-1185">Reference proteome</keyword>
<keyword id="KW-0964">Secreted</keyword>
<keyword id="KW-0732">Signal</keyword>
<protein>
    <recommendedName>
        <fullName>Thyroxine-binding globulin</fullName>
    </recommendedName>
    <alternativeName>
        <fullName>Serpin A7</fullName>
    </alternativeName>
    <alternativeName>
        <fullName>T4-binding globulin</fullName>
    </alternativeName>
</protein>
<gene>
    <name type="primary">SERPINA7</name>
    <name type="synonym">TBG</name>
</gene>
<comment type="function">
    <text evidence="1">Major thyroid hormone transport protein in serum.</text>
</comment>
<comment type="subcellular location">
    <subcellularLocation>
        <location>Secreted</location>
    </subcellularLocation>
</comment>
<comment type="tissue specificity">
    <text>Expressed by the liver and secreted in plasma.</text>
</comment>
<comment type="similarity">
    <text evidence="3">Belongs to the serpin family.</text>
</comment>
<dbReference type="EMBL" id="AF204928">
    <property type="protein sequence ID" value="AAF15301.1"/>
    <property type="molecule type" value="mRNA"/>
</dbReference>
<dbReference type="RefSeq" id="NP_777093.1">
    <property type="nucleotide sequence ID" value="NM_174668.2"/>
</dbReference>
<dbReference type="SMR" id="Q9TT36"/>
<dbReference type="FunCoup" id="Q9TT36">
    <property type="interactions" value="57"/>
</dbReference>
<dbReference type="STRING" id="9913.ENSBTAP00000054393"/>
<dbReference type="MEROPS" id="I04.955"/>
<dbReference type="GlyCosmos" id="Q9TT36">
    <property type="glycosylation" value="4 sites, No reported glycans"/>
</dbReference>
<dbReference type="GlyGen" id="Q9TT36">
    <property type="glycosylation" value="4 sites"/>
</dbReference>
<dbReference type="PaxDb" id="9913-ENSBTAP00000054393"/>
<dbReference type="GeneID" id="282518"/>
<dbReference type="KEGG" id="bta:282518"/>
<dbReference type="CTD" id="6906"/>
<dbReference type="eggNOG" id="KOG2392">
    <property type="taxonomic scope" value="Eukaryota"/>
</dbReference>
<dbReference type="InParanoid" id="Q9TT36"/>
<dbReference type="OrthoDB" id="671595at2759"/>
<dbReference type="Proteomes" id="UP000009136">
    <property type="component" value="Unplaced"/>
</dbReference>
<dbReference type="GO" id="GO:0005615">
    <property type="term" value="C:extracellular space"/>
    <property type="evidence" value="ECO:0000318"/>
    <property type="project" value="GO_Central"/>
</dbReference>
<dbReference type="GO" id="GO:0004867">
    <property type="term" value="F:serine-type endopeptidase inhibitor activity"/>
    <property type="evidence" value="ECO:0000318"/>
    <property type="project" value="GO_Central"/>
</dbReference>
<dbReference type="CDD" id="cd19555">
    <property type="entry name" value="serpinA7_TBG"/>
    <property type="match status" value="1"/>
</dbReference>
<dbReference type="FunFam" id="2.30.39.10:FF:000003">
    <property type="entry name" value="alpha-1-antitrypsin isoform X1"/>
    <property type="match status" value="1"/>
</dbReference>
<dbReference type="FunFam" id="3.30.497.10:FF:000001">
    <property type="entry name" value="Serine protease inhibitor"/>
    <property type="match status" value="1"/>
</dbReference>
<dbReference type="FunFam" id="2.10.310.10:FF:000001">
    <property type="entry name" value="Serpin family A member 1"/>
    <property type="match status" value="1"/>
</dbReference>
<dbReference type="Gene3D" id="2.30.39.10">
    <property type="entry name" value="Alpha-1-antitrypsin, domain 1"/>
    <property type="match status" value="1"/>
</dbReference>
<dbReference type="Gene3D" id="3.30.497.10">
    <property type="entry name" value="Antithrombin, subunit I, domain 2"/>
    <property type="match status" value="1"/>
</dbReference>
<dbReference type="Gene3D" id="2.10.310.10">
    <property type="entry name" value="Serpins superfamily"/>
    <property type="match status" value="1"/>
</dbReference>
<dbReference type="InterPro" id="IPR023795">
    <property type="entry name" value="Serpin_CS"/>
</dbReference>
<dbReference type="InterPro" id="IPR023796">
    <property type="entry name" value="Serpin_dom"/>
</dbReference>
<dbReference type="InterPro" id="IPR000215">
    <property type="entry name" value="Serpin_fam"/>
</dbReference>
<dbReference type="InterPro" id="IPR036186">
    <property type="entry name" value="Serpin_sf"/>
</dbReference>
<dbReference type="InterPro" id="IPR042178">
    <property type="entry name" value="Serpin_sf_1"/>
</dbReference>
<dbReference type="InterPro" id="IPR042185">
    <property type="entry name" value="Serpin_sf_2"/>
</dbReference>
<dbReference type="PANTHER" id="PTHR11461">
    <property type="entry name" value="SERINE PROTEASE INHIBITOR, SERPIN"/>
    <property type="match status" value="1"/>
</dbReference>
<dbReference type="PANTHER" id="PTHR11461:SF375">
    <property type="entry name" value="THYROXINE-BINDING GLOBULIN"/>
    <property type="match status" value="1"/>
</dbReference>
<dbReference type="Pfam" id="PF00079">
    <property type="entry name" value="Serpin"/>
    <property type="match status" value="1"/>
</dbReference>
<dbReference type="SMART" id="SM00093">
    <property type="entry name" value="SERPIN"/>
    <property type="match status" value="1"/>
</dbReference>
<dbReference type="SUPFAM" id="SSF56574">
    <property type="entry name" value="Serpins"/>
    <property type="match status" value="1"/>
</dbReference>
<dbReference type="PROSITE" id="PS00284">
    <property type="entry name" value="SERPIN"/>
    <property type="match status" value="1"/>
</dbReference>
<accession>Q9TT36</accession>
<organism>
    <name type="scientific">Bos taurus</name>
    <name type="common">Bovine</name>
    <dbReference type="NCBI Taxonomy" id="9913"/>
    <lineage>
        <taxon>Eukaryota</taxon>
        <taxon>Metazoa</taxon>
        <taxon>Chordata</taxon>
        <taxon>Craniata</taxon>
        <taxon>Vertebrata</taxon>
        <taxon>Euteleostomi</taxon>
        <taxon>Mammalia</taxon>
        <taxon>Eutheria</taxon>
        <taxon>Laurasiatheria</taxon>
        <taxon>Artiodactyla</taxon>
        <taxon>Ruminantia</taxon>
        <taxon>Pecora</taxon>
        <taxon>Bovidae</taxon>
        <taxon>Bovinae</taxon>
        <taxon>Bos</taxon>
    </lineage>
</organism>
<sequence length="411" mass="46017">MPLFSLVLLILGLHCAPPNSCEGKITSCLSPQQNATLYKMSSINADFAFNLYRRFTVEIPDQNIFFSPVSIPAGLAMLSLGACSSTQTQILEGLGFNLTDTPVAEIQQGFQHLICSLNFPKKELELQMGNALFIGKQLKPLEKFLDDVKNLYETEVFSTDFSNVSAAQQEINSHVEKQTKGKIVGLIQDLKPNTITVLVNYLCFKAQWANPFDPSKTEEGSSFLVDKTTTVQVPMMHQMEQYYHLVDTELNCTVLQMDYSKNALALFVLPKEGQMEWVEGAMSSKTLKKWNRLLRKGWVDLFVPKFSISATYDLGDILLKMGIQDAFADNADFSGLTKDNGLKVSNVAHKAMFYIGEKGTEAVPEVRFLNQPETTLLHPIIQFDRSFLLLILEKNTRSILFLGKVVDPTEA</sequence>
<evidence type="ECO:0000250" key="1"/>
<evidence type="ECO:0000255" key="2"/>
<evidence type="ECO:0000305" key="3"/>
<feature type="signal peptide" evidence="2">
    <location>
        <begin position="1"/>
        <end position="15"/>
    </location>
</feature>
<feature type="chain" id="PRO_0000032435" description="Thyroxine-binding globulin">
    <location>
        <begin position="16"/>
        <end position="411"/>
    </location>
</feature>
<feature type="binding site" evidence="1">
    <location>
        <position position="291"/>
    </location>
    <ligand>
        <name>thyroxine</name>
        <dbReference type="ChEBI" id="CHEBI:305790"/>
    </ligand>
</feature>
<feature type="binding site" evidence="1">
    <location>
        <position position="394"/>
    </location>
    <ligand>
        <name>thyroxine</name>
        <dbReference type="ChEBI" id="CHEBI:305790"/>
    </ligand>
</feature>
<feature type="glycosylation site" description="N-linked (GlcNAc...) asparagine" evidence="2">
    <location>
        <position position="34"/>
    </location>
</feature>
<feature type="glycosylation site" description="N-linked (GlcNAc...) asparagine" evidence="2">
    <location>
        <position position="97"/>
    </location>
</feature>
<feature type="glycosylation site" description="N-linked (GlcNAc...) asparagine" evidence="2">
    <location>
        <position position="163"/>
    </location>
</feature>
<feature type="glycosylation site" description="N-linked (GlcNAc...) asparagine" evidence="2">
    <location>
        <position position="251"/>
    </location>
</feature>
<name>THBG_BOVIN</name>